<dbReference type="EC" id="3.1.27.-"/>
<dbReference type="EMBL" id="D88586">
    <property type="protein sequence ID" value="BAA13648.1"/>
    <property type="molecule type" value="mRNA"/>
</dbReference>
<dbReference type="RefSeq" id="NP_620257.1">
    <property type="nucleotide sequence ID" value="NM_138902.1"/>
</dbReference>
<dbReference type="RefSeq" id="XP_002728238.1">
    <property type="nucleotide sequence ID" value="XM_002728192.4"/>
</dbReference>
<dbReference type="SMR" id="P70709"/>
<dbReference type="FunCoup" id="P70709">
    <property type="interactions" value="44"/>
</dbReference>
<dbReference type="STRING" id="10116.ENSRNOP00000044390"/>
<dbReference type="GlyCosmos" id="P70709">
    <property type="glycosylation" value="2 sites, No reported glycans"/>
</dbReference>
<dbReference type="GlyGen" id="P70709">
    <property type="glycosylation" value="3 sites"/>
</dbReference>
<dbReference type="PhosphoSitePlus" id="P70709"/>
<dbReference type="PaxDb" id="10116-ENSRNOP00000044390"/>
<dbReference type="Ensembl" id="ENSRNOT00000105605.1">
    <property type="protein sequence ID" value="ENSRNOP00000076490.1"/>
    <property type="gene ID" value="ENSRNOG00000068464.1"/>
</dbReference>
<dbReference type="Ensembl" id="ENSRNOT00000119723.1">
    <property type="protein sequence ID" value="ENSRNOP00000084145.1"/>
    <property type="gene ID" value="ENSRNOG00000064658.1"/>
</dbReference>
<dbReference type="GeneID" id="192264"/>
<dbReference type="KEGG" id="rno:192264"/>
<dbReference type="AGR" id="RGD:2319312"/>
<dbReference type="AGR" id="RGD:621580"/>
<dbReference type="CTD" id="6037"/>
<dbReference type="RGD" id="621580">
    <property type="gene designation" value="Rnase3"/>
</dbReference>
<dbReference type="eggNOG" id="ENOG502TF52">
    <property type="taxonomic scope" value="Eukaryota"/>
</dbReference>
<dbReference type="GeneTree" id="ENSGT00940000162253"/>
<dbReference type="HOGENOM" id="CLU_117006_0_1_1"/>
<dbReference type="InParanoid" id="P70709"/>
<dbReference type="OMA" id="PRCTIAM"/>
<dbReference type="OrthoDB" id="9450033at2759"/>
<dbReference type="PhylomeDB" id="P70709"/>
<dbReference type="TreeFam" id="TF333393"/>
<dbReference type="Reactome" id="R-RNO-6798695">
    <property type="pathway name" value="Neutrophil degranulation"/>
</dbReference>
<dbReference type="PRO" id="PR:P70709"/>
<dbReference type="Proteomes" id="UP000002494">
    <property type="component" value="Chromosome 15"/>
</dbReference>
<dbReference type="Bgee" id="ENSRNOG00000031445">
    <property type="expression patterns" value="Expressed in lung and 5 other cell types or tissues"/>
</dbReference>
<dbReference type="ExpressionAtlas" id="P70709">
    <property type="expression patterns" value="baseline and differential"/>
</dbReference>
<dbReference type="GO" id="GO:0005737">
    <property type="term" value="C:cytoplasm"/>
    <property type="evidence" value="ECO:0000266"/>
    <property type="project" value="RGD"/>
</dbReference>
<dbReference type="GO" id="GO:0005615">
    <property type="term" value="C:extracellular space"/>
    <property type="evidence" value="ECO:0000266"/>
    <property type="project" value="RGD"/>
</dbReference>
<dbReference type="GO" id="GO:0004519">
    <property type="term" value="F:endonuclease activity"/>
    <property type="evidence" value="ECO:0007669"/>
    <property type="project" value="UniProtKB-KW"/>
</dbReference>
<dbReference type="GO" id="GO:0001530">
    <property type="term" value="F:lipopolysaccharide binding"/>
    <property type="evidence" value="ECO:0000266"/>
    <property type="project" value="RGD"/>
</dbReference>
<dbReference type="GO" id="GO:0003676">
    <property type="term" value="F:nucleic acid binding"/>
    <property type="evidence" value="ECO:0007669"/>
    <property type="project" value="InterPro"/>
</dbReference>
<dbReference type="GO" id="GO:0004540">
    <property type="term" value="F:RNA nuclease activity"/>
    <property type="evidence" value="ECO:0000318"/>
    <property type="project" value="GO_Central"/>
</dbReference>
<dbReference type="GO" id="GO:0061844">
    <property type="term" value="P:antimicrobial humoral immune response mediated by antimicrobial peptide"/>
    <property type="evidence" value="ECO:0000266"/>
    <property type="project" value="RGD"/>
</dbReference>
<dbReference type="GO" id="GO:0006935">
    <property type="term" value="P:chemotaxis"/>
    <property type="evidence" value="ECO:0000318"/>
    <property type="project" value="GO_Central"/>
</dbReference>
<dbReference type="GO" id="GO:0050830">
    <property type="term" value="P:defense response to Gram-positive bacterium"/>
    <property type="evidence" value="ECO:0000318"/>
    <property type="project" value="GO_Central"/>
</dbReference>
<dbReference type="GO" id="GO:0045087">
    <property type="term" value="P:innate immune response"/>
    <property type="evidence" value="ECO:0000266"/>
    <property type="project" value="RGD"/>
</dbReference>
<dbReference type="GO" id="GO:0002227">
    <property type="term" value="P:innate immune response in mucosa"/>
    <property type="evidence" value="ECO:0000266"/>
    <property type="project" value="RGD"/>
</dbReference>
<dbReference type="CDD" id="cd06265">
    <property type="entry name" value="RNase_A_canonical"/>
    <property type="match status" value="1"/>
</dbReference>
<dbReference type="FunFam" id="3.10.130.10:FF:000001">
    <property type="entry name" value="Ribonuclease pancreatic"/>
    <property type="match status" value="1"/>
</dbReference>
<dbReference type="Gene3D" id="3.10.130.10">
    <property type="entry name" value="Ribonuclease A-like domain"/>
    <property type="match status" value="1"/>
</dbReference>
<dbReference type="InterPro" id="IPR001427">
    <property type="entry name" value="RNaseA"/>
</dbReference>
<dbReference type="InterPro" id="IPR036816">
    <property type="entry name" value="RNaseA-like_dom_sf"/>
</dbReference>
<dbReference type="InterPro" id="IPR023411">
    <property type="entry name" value="RNaseA_AS"/>
</dbReference>
<dbReference type="InterPro" id="IPR023412">
    <property type="entry name" value="RNaseA_domain"/>
</dbReference>
<dbReference type="PANTHER" id="PTHR11437:SF3">
    <property type="entry name" value="EOSINOPHIL CATIONIC PROTEIN"/>
    <property type="match status" value="1"/>
</dbReference>
<dbReference type="PANTHER" id="PTHR11437">
    <property type="entry name" value="RIBONUCLEASE"/>
    <property type="match status" value="1"/>
</dbReference>
<dbReference type="Pfam" id="PF00074">
    <property type="entry name" value="RnaseA"/>
    <property type="match status" value="1"/>
</dbReference>
<dbReference type="PRINTS" id="PR00794">
    <property type="entry name" value="RIBONUCLEASE"/>
</dbReference>
<dbReference type="SMART" id="SM00092">
    <property type="entry name" value="RNAse_Pc"/>
    <property type="match status" value="1"/>
</dbReference>
<dbReference type="SUPFAM" id="SSF54076">
    <property type="entry name" value="RNase A-like"/>
    <property type="match status" value="1"/>
</dbReference>
<dbReference type="PROSITE" id="PS00127">
    <property type="entry name" value="RNASE_PANCREATIC"/>
    <property type="match status" value="1"/>
</dbReference>
<organism>
    <name type="scientific">Rattus norvegicus</name>
    <name type="common">Rat</name>
    <dbReference type="NCBI Taxonomy" id="10116"/>
    <lineage>
        <taxon>Eukaryota</taxon>
        <taxon>Metazoa</taxon>
        <taxon>Chordata</taxon>
        <taxon>Craniata</taxon>
        <taxon>Vertebrata</taxon>
        <taxon>Euteleostomi</taxon>
        <taxon>Mammalia</taxon>
        <taxon>Eutheria</taxon>
        <taxon>Euarchontoglires</taxon>
        <taxon>Glires</taxon>
        <taxon>Rodentia</taxon>
        <taxon>Myomorpha</taxon>
        <taxon>Muroidea</taxon>
        <taxon>Muridae</taxon>
        <taxon>Murinae</taxon>
        <taxon>Rattus</taxon>
    </lineage>
</organism>
<comment type="function">
    <text evidence="1">Cytotoxin and helminthotoxin with ribonuclease activity. Possesses a wide variety of biological activities (By similarity).</text>
</comment>
<comment type="subcellular location">
    <subcellularLocation>
        <location evidence="1">Cytoplasmic granule</location>
    </subcellularLocation>
    <text evidence="1">Matrix of eosinophil's large specific granule.</text>
</comment>
<comment type="similarity">
    <text evidence="3">Belongs to the pancreatic ribonuclease family.</text>
</comment>
<accession>P70709</accession>
<reference key="1">
    <citation type="journal article" date="1997" name="Biochim. Biophys. Acta">
        <title>Identification of cDNA encoding rat eosinophil cationic protein/eosinophil-associated ribonuclease.</title>
        <authorList>
            <person name="Nittoh T."/>
            <person name="Hirakata M."/>
            <person name="Mue S."/>
            <person name="Ohuchi K."/>
        </authorList>
    </citation>
    <scope>NUCLEOTIDE SEQUENCE [MRNA]</scope>
    <source>
        <strain>Sprague-Dawley</strain>
        <tissue>Bone marrow</tissue>
    </source>
</reference>
<protein>
    <recommendedName>
        <fullName>Eosinophil cationic protein</fullName>
        <shortName>ECP</shortName>
        <ecNumber>3.1.27.-</ecNumber>
    </recommendedName>
    <alternativeName>
        <fullName>Eosinophil secondary granule ribonuclease 11</fullName>
        <shortName>EAR-11</shortName>
    </alternativeName>
    <alternativeName>
        <fullName>Ribonuclease 3</fullName>
        <shortName>RNase 3</shortName>
    </alternativeName>
</protein>
<keyword id="KW-1015">Disulfide bond</keyword>
<keyword id="KW-0255">Endonuclease</keyword>
<keyword id="KW-0325">Glycoprotein</keyword>
<keyword id="KW-0378">Hydrolase</keyword>
<keyword id="KW-0540">Nuclease</keyword>
<keyword id="KW-1185">Reference proteome</keyword>
<keyword id="KW-0732">Signal</keyword>
<gene>
    <name type="primary">Rnase3</name>
    <name type="synonym">Ear11</name>
    <name type="synonym">Rns3</name>
</gene>
<name>ECP_RAT</name>
<sequence length="155" mass="18007">MGLKLLESRLCLLLSLGLVLMLASCQPPTPSQWFEIQHIYNRAYPRCNDAMRHRNRFTGHCKDINTFLHTSFASVVGVCGNRNIPCGNRTYRNCHNSRYRVSITFCNLTTPARIYTQCRYQTTRSRKFYTVGCDPRTPRDSPMYPVVPVHLDRIF</sequence>
<feature type="signal peptide" evidence="2">
    <location>
        <begin position="1"/>
        <end position="25"/>
    </location>
</feature>
<feature type="chain" id="PRO_0000030866" description="Eosinophil cationic protein">
    <location>
        <begin position="26"/>
        <end position="155"/>
    </location>
</feature>
<feature type="active site" description="Proton acceptor" evidence="1">
    <location>
        <position position="38"/>
    </location>
</feature>
<feature type="active site" description="Proton donor" evidence="1">
    <location>
        <position position="150"/>
    </location>
</feature>
<feature type="binding site" evidence="1">
    <location>
        <begin position="62"/>
        <end position="66"/>
    </location>
    <ligand>
        <name>substrate</name>
    </ligand>
</feature>
<feature type="glycosylation site" description="N-linked (GlcNAc...) asparagine" evidence="2">
    <location>
        <position position="88"/>
    </location>
</feature>
<feature type="glycosylation site" description="N-linked (GlcNAc...) asparagine" evidence="2">
    <location>
        <position position="107"/>
    </location>
</feature>
<feature type="disulfide bond" evidence="1">
    <location>
        <begin position="47"/>
        <end position="106"/>
    </location>
</feature>
<feature type="disulfide bond" evidence="1">
    <location>
        <begin position="61"/>
        <end position="118"/>
    </location>
</feature>
<feature type="disulfide bond" evidence="1">
    <location>
        <begin position="79"/>
        <end position="133"/>
    </location>
</feature>
<feature type="disulfide bond" evidence="1">
    <location>
        <begin position="86"/>
        <end position="94"/>
    </location>
</feature>
<evidence type="ECO:0000250" key="1"/>
<evidence type="ECO:0000255" key="2"/>
<evidence type="ECO:0000305" key="3"/>
<proteinExistence type="evidence at transcript level"/>